<sequence length="1518" mass="165954">MAAVGSGGYARNDAGEKLPSVMAGVPARRGQSSPPPAPPICLRRRTRLSTASEETVQNRVSLEKVLGITAQNSSGLTCDPGTGHVAYLAGCVVVILDPKENKQQHIFNTARKSLSALAFSPDGKYIVTGENGHRPAVRIWDVEEKNQVAEMLGHKYGVACVAFSPNMKHIVSMGYQHDMVLNVWDWKKDIVVASNKVSCRVIALSFSEDSSYFVTVGNRHVRFWFLEVSTETKVTSTVPLVGRSGILGELHNNIFCGVACGRGRMAGSTFCVSYSGLLCQFNEKRVLEKWINLKVSLSSCLCVSQELIFCGCTDGIVRIFQAHSLHYLANLPKPHYLGVDVAQGLEPSFLFHRKAEAVYPDTVALTFDPIHQWLSCVYKDHSIYIWDVKDINRVGKVWSELFHSSYVWNVEVYPEFEDQRACLPSGSFLTCSSDNTIRFWNLDSSPDSHWQKNIFSNTLLKVVYVENDIQHLQDMSHFPDRGSENGTPMDVKAGVRVMQVSPDGQHLASGDRSGNLRIHELHFMDELVKVEAHDAEVLCLEYSKPETGLTLLASASRDRLIHVLNVEKNYNLEQTLDDHSSSITAIKFAGNRDIQMISCGADKSIYFRSAQQGSDGLHFVRTHHVAEKTTLYDMDIDITQKYVAVACQDRNVRVYNTVNGKQKKCYKGSQGDEGSLLKVHVDPSGTFLATSCSDKSISVIDFYSGECIAKMFGHSEIITSMKFTYDCHHLITVSGDSCVFIWHLGPEITNCMKQHLLEIDHRQQQQHTNDKKRSGHPRQDTYVSTPSEIHSLSPGEQTEDDLEEECEPEEMLKTPSKDSLDPDPRCLLTNGKLPLWAKRLLGDDDVADGLAFHAKRSYQPHGRWAERAGQEPLKTILDAQDLDCYFTPMKPESLENSILDSLEPQSLASLLSESESPQEAGRGHPSFLPQQKESSEASELILYSLEAEVTVTGTDSQYCRKEVEAGPGDQQGDSYLRVSSDSPKDQSPPEDSGESEADLECSFAAIHSPAPPPDPAPRFATSLPHFPGCAGPTEDELSLPEGPSVPSSSLPQTPEQEKFLRHHFETLTESPCRALGDVEASEAEDHFFNPRLSISTQFLSSLQKASRFTHTFPPRATQCLVKSPEVKLMDRGGSQPRAGTGYASPDRTHVLAAGKAEETLEAWRPPPPCLTSLASCVPASSVLPTDRNLPTPTSAPTPGLAQGVHAPSTCSYMEATASSRARISRSISLGDSEGPIVATLAQPLRRPSSVGELASLGQELQAITTATTPSLDSEGQEPALRSWGNHEARANLRLTLSSACDGLLQPPVDTQPGVTVPAVSFPAPSPVEESALRLHGSAFRPSLPAPESPGLPAHPSNPQLPEARPGIPGGTASLLEPTSGALGLLQGSPARWSEPWVPVEALPPSPLELSRVGNILHRLQTTFQEALDLYRVLVSSGQVDTGQQQARTELVSTFLWIHSQLEAECLVGTSVAPAQALPSPGPPSPPTLYPLASPDLQALLEHYSELLVQAVRRKARGH</sequence>
<gene>
    <name type="primary">WDR62</name>
    <name type="synonym">C19orf14</name>
</gene>
<proteinExistence type="evidence at protein level"/>
<evidence type="ECO:0000250" key="1">
    <source>
        <dbReference type="UniProtKB" id="Q3U3T8"/>
    </source>
</evidence>
<evidence type="ECO:0000256" key="2">
    <source>
        <dbReference type="SAM" id="MobiDB-lite"/>
    </source>
</evidence>
<evidence type="ECO:0000269" key="3">
    <source>
    </source>
</evidence>
<evidence type="ECO:0000269" key="4">
    <source>
    </source>
</evidence>
<evidence type="ECO:0000269" key="5">
    <source>
    </source>
</evidence>
<evidence type="ECO:0000269" key="6">
    <source>
    </source>
</evidence>
<evidence type="ECO:0000269" key="7">
    <source>
    </source>
</evidence>
<evidence type="ECO:0000269" key="8">
    <source>
    </source>
</evidence>
<evidence type="ECO:0000269" key="9">
    <source>
    </source>
</evidence>
<evidence type="ECO:0000269" key="10">
    <source>
    </source>
</evidence>
<evidence type="ECO:0000269" key="11">
    <source>
    </source>
</evidence>
<evidence type="ECO:0000269" key="12">
    <source>
    </source>
</evidence>
<evidence type="ECO:0000303" key="13">
    <source>
    </source>
</evidence>
<evidence type="ECO:0000303" key="14">
    <source>
    </source>
</evidence>
<evidence type="ECO:0000303" key="15">
    <source>
    </source>
</evidence>
<evidence type="ECO:0000305" key="16"/>
<evidence type="ECO:0007744" key="17">
    <source>
    </source>
</evidence>
<evidence type="ECO:0007744" key="18">
    <source>
    </source>
</evidence>
<evidence type="ECO:0007744" key="19">
    <source>
    </source>
</evidence>
<evidence type="ECO:0007744" key="20">
    <source>
    </source>
</evidence>
<evidence type="ECO:0007744" key="21">
    <source>
    </source>
</evidence>
<evidence type="ECO:0007744" key="22">
    <source>
    </source>
</evidence>
<evidence type="ECO:0007744" key="23">
    <source>
    </source>
</evidence>
<accession>O43379</accession>
<accession>Q63HP9</accession>
<accession>Q659D7</accession>
<accession>Q8NBF7</accession>
<accession>Q96AD9</accession>
<comment type="function">
    <text evidence="6 7 11">Required for cerebral cortical development. Plays a role in neuronal proliferation and migration (PubMed:20729831, PubMed:20890278). Plays a role in mother-centriole-dependent centriole duplication; the function also seems to involve CEP152, CDK5RAP2 and CEP63 through a stepwise assembled complex at the centrosome that recruits CDK2 required for centriole duplication (PubMed:26297806).</text>
</comment>
<comment type="subunit">
    <text evidence="10 11 12">Can form homodimers (via C-terminus) (PubMed:23341463). Interacts (via C-terminus) with MAPKBP1 (via C-terminus) (PubMed:23341463, PubMed:28089251). Interacts with CDK5RAP2, CEP152, CEP63 and KIAA0753 (PubMed:26297806). CEP63, CDK5RAP2, CEP152, WDR62 are proposed to form a stepwise assembled complex at the centrosome forming a ring near parental centrioles (PubMed:26297806).</text>
</comment>
<comment type="interaction">
    <interactant intactId="EBI-714790">
        <id>O43379</id>
    </interactant>
    <interactant intactId="EBI-749432">
        <id>Q92630</id>
        <label>DYRK2</label>
    </interactant>
    <organismsDiffer>false</organismsDiffer>
    <experiments>3</experiments>
</comment>
<comment type="interaction">
    <interactant intactId="EBI-714790">
        <id>O43379</id>
    </interactant>
    <interactant intactId="EBI-744099">
        <id>Q9H0I2</id>
        <label>ENKD1</label>
    </interactant>
    <organismsDiffer>false</organismsDiffer>
    <experiments>4</experiments>
</comment>
<comment type="interaction">
    <interactant intactId="EBI-714790">
        <id>O43379</id>
    </interactant>
    <interactant intactId="EBI-2805604">
        <id>Q2KHM9</id>
        <label>KIAA0753</label>
    </interactant>
    <organismsDiffer>false</organismsDiffer>
    <experiments>3</experiments>
</comment>
<comment type="interaction">
    <interactant intactId="EBI-714790">
        <id>O43379</id>
    </interactant>
    <interactant intactId="EBI-751857">
        <id>O15481</id>
        <label>MAGEB4</label>
    </interactant>
    <organismsDiffer>false</organismsDiffer>
    <experiments>3</experiments>
</comment>
<comment type="interaction">
    <interactant intactId="EBI-714790">
        <id>O43379</id>
    </interactant>
    <interactant intactId="EBI-713568">
        <id>P45984</id>
        <label>MAPK9</label>
    </interactant>
    <organismsDiffer>false</organismsDiffer>
    <experiments>5</experiments>
</comment>
<comment type="interaction">
    <interactant intactId="EBI-714790">
        <id>O43379</id>
    </interactant>
    <interactant intactId="EBI-10181968">
        <id>Q7Z4N8</id>
        <label>P4HA3</label>
    </interactant>
    <organismsDiffer>false</organismsDiffer>
    <experiments>3</experiments>
</comment>
<comment type="interaction">
    <interactant intactId="EBI-714790">
        <id>O43379</id>
    </interactant>
    <interactant intactId="EBI-476295">
        <id>P31947</id>
        <label>SFN</label>
    </interactant>
    <organismsDiffer>false</organismsDiffer>
    <experiments>4</experiments>
</comment>
<comment type="interaction">
    <interactant intactId="EBI-714790">
        <id>O43379</id>
    </interactant>
    <interactant intactId="EBI-2853126">
        <id>Q9NUY8</id>
        <label>TBC1D23</label>
    </interactant>
    <organismsDiffer>false</organismsDiffer>
    <experiments>3</experiments>
</comment>
<comment type="interaction">
    <interactant intactId="EBI-714790">
        <id>O43379</id>
    </interactant>
    <interactant intactId="EBI-10314276">
        <id>Q9NUY8-2</id>
        <label>TBC1D23</label>
    </interactant>
    <organismsDiffer>false</organismsDiffer>
    <experiments>3</experiments>
</comment>
<comment type="interaction">
    <interactant intactId="EBI-714790">
        <id>O43379</id>
    </interactant>
    <interactant intactId="EBI-356498">
        <id>P62258</id>
        <label>YWHAE</label>
    </interactant>
    <organismsDiffer>false</organismsDiffer>
    <experiments>5</experiments>
</comment>
<comment type="subcellular location">
    <subcellularLocation>
        <location evidence="6 9">Nucleus</location>
    </subcellularLocation>
    <subcellularLocation>
        <location evidence="7 8 12">Cytoplasm</location>
        <location evidence="7 8 12">Cytoskeleton</location>
        <location evidence="7 8 12">Spindle pole</location>
    </subcellularLocation>
    <subcellularLocation>
        <location evidence="7 9 11">Cytoplasm</location>
        <location evidence="7 9 11">Cytoskeleton</location>
        <location evidence="7 9 11">Microtubule organizing center</location>
        <location evidence="7 9 11">Centrosome</location>
    </subcellularLocation>
    <subcellularLocation>
        <location evidence="11">Cytoplasm</location>
        <location evidence="11">Cytoskeleton</location>
        <location evidence="11">Microtubule organizing center</location>
        <location evidence="11">Centrosome</location>
        <location evidence="11">Centriole</location>
    </subcellularLocation>
    <text evidence="7 11">Shows cell cycle-dependent localization. Accumulates to the spindle pole during mitosis. Colocalizes with CDK5RAP2, CEP152 and WDR62 in a discrete ring around the proximal end of the parental centriole. At this site, a cohesive structure is predicted to engage parental centrioles and procentrioles.</text>
</comment>
<comment type="alternative products">
    <event type="alternative splicing"/>
    <isoform>
        <id>O43379-1</id>
        <name>1</name>
        <sequence type="displayed"/>
    </isoform>
    <isoform>
        <id>O43379-2</id>
        <name>2</name>
        <sequence type="described" ref="VSP_024079 VSP_024080"/>
    </isoform>
    <isoform>
        <id>O43379-3</id>
        <name>3</name>
        <sequence type="described" ref="VSP_024077 VSP_024078"/>
    </isoform>
    <isoform>
        <id>O43379-4</id>
        <name>4</name>
        <sequence type="described" ref="VSP_039906"/>
    </isoform>
</comment>
<comment type="tissue specificity">
    <text evidence="8">Present in fetal brain, enriched within the ventricular and subventricular zone (at protein level). In the embryonic brain it is expressed in mitotic neural precursor cells.</text>
</comment>
<comment type="disease" evidence="6 7 8 9">
    <disease id="DI-03164">
        <name>Microcephaly 2, primary, autosomal recessive, with or without cortical malformations</name>
        <acronym>MCPH2</acronym>
        <description>A disease characterized by microcephaly, moderate to severe intellectual disability, and various type of cortical malformations in most patients. Microcephaly is defined as a head circumference more than 3 standard deviations below the age-related mean. Cortical malformations include pachygyria with cortical thickening, microgyria, lissencephaly, hypoplasia of the corpus callosum, schizencephaly. All affected individuals have delayed psychomotor development. Some patients have seizures.</description>
        <dbReference type="MIM" id="604317"/>
    </disease>
    <text>The disease is caused by variants affecting the gene represented in this entry.</text>
</comment>
<comment type="miscellaneous">
    <molecule>Isoform 2</molecule>
    <text evidence="16">May be produced at very low levels due to a premature stop codon in the mRNA, leading to nonsense-mediated mRNA decay.</text>
</comment>
<comment type="sequence caution" evidence="16">
    <conflict type="erroneous gene model prediction">
        <sequence resource="EMBL-CDS" id="AAC27979"/>
    </conflict>
</comment>
<comment type="sequence caution" evidence="16">
    <conflict type="erroneous initiation">
        <sequence resource="EMBL-CDS" id="AAH17261"/>
    </conflict>
    <text>Truncated N-terminus.</text>
</comment>
<feature type="initiator methionine" description="Removed" evidence="18 22">
    <location>
        <position position="1"/>
    </location>
</feature>
<feature type="chain" id="PRO_0000281879" description="WD repeat-containing protein 62">
    <location>
        <begin position="2"/>
        <end position="1518"/>
    </location>
</feature>
<feature type="repeat" description="WD 1">
    <location>
        <begin position="109"/>
        <end position="150"/>
    </location>
</feature>
<feature type="repeat" description="WD 2">
    <location>
        <begin position="153"/>
        <end position="194"/>
    </location>
</feature>
<feature type="repeat" description="WD 3">
    <location>
        <begin position="196"/>
        <end position="234"/>
    </location>
</feature>
<feature type="repeat" description="WD 4">
    <location>
        <begin position="291"/>
        <end position="330"/>
    </location>
</feature>
<feature type="repeat" description="WD 5">
    <location>
        <begin position="357"/>
        <end position="396"/>
    </location>
</feature>
<feature type="repeat" description="WD 6">
    <location>
        <begin position="402"/>
        <end position="450"/>
    </location>
</feature>
<feature type="repeat" description="WD 7">
    <location>
        <begin position="490"/>
        <end position="529"/>
    </location>
</feature>
<feature type="repeat" description="WD 8">
    <location>
        <begin position="532"/>
        <end position="574"/>
    </location>
</feature>
<feature type="repeat" description="WD 9">
    <location>
        <begin position="578"/>
        <end position="618"/>
    </location>
</feature>
<feature type="repeat" description="WD 10">
    <location>
        <begin position="626"/>
        <end position="665"/>
    </location>
</feature>
<feature type="repeat" description="WD 11">
    <location>
        <begin position="671"/>
        <end position="713"/>
    </location>
</feature>
<feature type="repeat" description="WD 12">
    <location>
        <begin position="714"/>
        <end position="752"/>
    </location>
</feature>
<feature type="repeat" description="WD 13">
    <location>
        <begin position="803"/>
        <end position="846"/>
    </location>
</feature>
<feature type="repeat" description="WD 14">
    <location>
        <begin position="1132"/>
        <end position="1173"/>
    </location>
</feature>
<feature type="repeat" description="WD 15">
    <location>
        <begin position="1255"/>
        <end position="1293"/>
    </location>
</feature>
<feature type="region of interest" description="Disordered" evidence="2">
    <location>
        <begin position="762"/>
        <end position="824"/>
    </location>
</feature>
<feature type="region of interest" description="Disordered" evidence="2">
    <location>
        <begin position="908"/>
        <end position="935"/>
    </location>
</feature>
<feature type="region of interest" description="Disordered" evidence="2">
    <location>
        <begin position="962"/>
        <end position="1055"/>
    </location>
</feature>
<feature type="region of interest" description="Disordered" evidence="2">
    <location>
        <begin position="1339"/>
        <end position="1377"/>
    </location>
</feature>
<feature type="compositionally biased region" description="Basic and acidic residues" evidence="2">
    <location>
        <begin position="762"/>
        <end position="772"/>
    </location>
</feature>
<feature type="compositionally biased region" description="Polar residues" evidence="2">
    <location>
        <begin position="781"/>
        <end position="790"/>
    </location>
</feature>
<feature type="compositionally biased region" description="Acidic residues" evidence="2">
    <location>
        <begin position="797"/>
        <end position="809"/>
    </location>
</feature>
<feature type="compositionally biased region" description="Basic and acidic residues" evidence="2">
    <location>
        <begin position="810"/>
        <end position="824"/>
    </location>
</feature>
<feature type="compositionally biased region" description="Low complexity" evidence="2">
    <location>
        <begin position="908"/>
        <end position="920"/>
    </location>
</feature>
<feature type="compositionally biased region" description="Polar residues" evidence="2">
    <location>
        <begin position="971"/>
        <end position="981"/>
    </location>
</feature>
<feature type="compositionally biased region" description="Polar residues" evidence="2">
    <location>
        <begin position="1045"/>
        <end position="1054"/>
    </location>
</feature>
<feature type="modified residue" description="N-acetylalanine" evidence="18 22">
    <location>
        <position position="2"/>
    </location>
</feature>
<feature type="modified residue" description="Phosphoserine" evidence="23">
    <location>
        <position position="33"/>
    </location>
</feature>
<feature type="modified residue" description="Phosphothreonine" evidence="21">
    <location>
        <position position="46"/>
    </location>
</feature>
<feature type="modified residue" description="Phosphoserine" evidence="17 20 21 23">
    <location>
        <position position="49"/>
    </location>
</feature>
<feature type="modified residue" description="Phosphothreonine" evidence="17 23">
    <location>
        <position position="50"/>
    </location>
</feature>
<feature type="modified residue" description="Phosphoserine" evidence="17">
    <location>
        <position position="52"/>
    </location>
</feature>
<feature type="modified residue" description="Phosphoserine" evidence="17 20 23">
    <location>
        <position position="501"/>
    </location>
</feature>
<feature type="modified residue" description="Phosphoserine" evidence="1">
    <location>
        <position position="944"/>
    </location>
</feature>
<feature type="modified residue" description="Phosphothreonine" evidence="17">
    <location>
        <position position="1053"/>
    </location>
</feature>
<feature type="modified residue" description="Phosphoserine" evidence="23">
    <location>
        <position position="1070"/>
    </location>
</feature>
<feature type="modified residue" description="Phosphoserine" evidence="20">
    <location>
        <position position="1093"/>
    </location>
</feature>
<feature type="modified residue" description="Phosphoserine" evidence="20">
    <location>
        <position position="1101"/>
    </location>
</feature>
<feature type="modified residue" description="Phosphoserine" evidence="17 23">
    <location>
        <position position="1123"/>
    </location>
</feature>
<feature type="modified residue" description="Phosphoserine" evidence="23">
    <location>
        <position position="1144"/>
    </location>
</feature>
<feature type="modified residue" description="Phosphoserine" evidence="17 23">
    <location>
        <position position="1228"/>
    </location>
</feature>
<feature type="modified residue" description="Phosphoserine" evidence="19">
    <location>
        <position position="1248"/>
    </location>
</feature>
<feature type="modified residue" description="Phosphoserine" evidence="19">
    <location>
        <position position="1249"/>
    </location>
</feature>
<feature type="modified residue" description="Phosphothreonine" evidence="17">
    <location>
        <position position="1268"/>
    </location>
</feature>
<feature type="splice variant" id="VSP_024077" description="In isoform 3." evidence="13">
    <original>VYP</original>
    <variation>ALS</variation>
    <location>
        <begin position="412"/>
        <end position="414"/>
    </location>
</feature>
<feature type="splice variant" id="VSP_024078" description="In isoform 3." evidence="13">
    <location>
        <begin position="415"/>
        <end position="1518"/>
    </location>
</feature>
<feature type="splice variant" id="VSP_024079" description="In isoform 2." evidence="15">
    <original>TLLKVVYVENDIQHLQDMSHFPDRGS</original>
    <variation>LAPALQMCGRGHSRQPNTPSPGEIAS</variation>
    <location>
        <begin position="458"/>
        <end position="483"/>
    </location>
</feature>
<feature type="splice variant" id="VSP_024080" description="In isoform 2." evidence="15">
    <location>
        <begin position="484"/>
        <end position="1518"/>
    </location>
</feature>
<feature type="splice variant" id="VSP_039906" description="In isoform 4." evidence="14">
    <original>R</original>
    <variation>RELFPA</variation>
    <location>
        <position position="1073"/>
    </location>
</feature>
<feature type="sequence variant" id="VAR_065843" description="In MCPH2; dbSNP:rs387907084." evidence="7 8">
    <original>V</original>
    <variation>M</variation>
    <location>
        <position position="65"/>
    </location>
</feature>
<feature type="sequence variant" id="VAR_063702" description="In MCPH2; dbSNP:rs267607176." evidence="6">
    <original>W</original>
    <variation>S</variation>
    <location>
        <position position="224"/>
    </location>
</feature>
<feature type="sequence variant" id="VAR_055014" description="In dbSNP:rs12327568.">
    <original>K</original>
    <variation>R</variation>
    <location>
        <position position="289"/>
    </location>
</feature>
<feature type="sequence variant" id="VAR_065844" description="In MCPH2; the mutant protein does not localize to the spindle pole during mitosis; dbSNP:rs387907082." evidence="8">
    <original>R</original>
    <variation>H</variation>
    <location>
        <position position="438"/>
    </location>
</feature>
<feature type="sequence variant" id="VAR_065845" description="In MCPH2; dbSNP:rs387907083." evidence="8">
    <original>D</original>
    <variation>N</variation>
    <location>
        <position position="511"/>
    </location>
</feature>
<feature type="sequence variant" id="VAR_063703" description="In MCPH2; dbSNP:rs147875659." evidence="6">
    <original>E</original>
    <variation>K</variation>
    <location>
        <position position="526"/>
    </location>
</feature>
<feature type="sequence variant" id="VAR_031299" description="In dbSNP:rs2285745." evidence="3 4">
    <original>L</original>
    <variation>S</variation>
    <location>
        <position position="850"/>
    </location>
</feature>
<feature type="sequence variant" id="VAR_055015" description="In dbSNP:rs2074435." evidence="4 5">
    <original>Q</original>
    <variation>L</variation>
    <location>
        <position position="1305"/>
    </location>
</feature>
<feature type="sequence variant" id="VAR_057629" description="In dbSNP:rs35811023.">
    <original>Q</original>
    <variation>E</variation>
    <location>
        <position position="1311"/>
    </location>
</feature>
<feature type="sequence variant" id="VAR_031300" description="In dbSNP:rs17851503." evidence="4">
    <original>G</original>
    <variation>S</variation>
    <location>
        <position position="1370"/>
    </location>
</feature>
<feature type="sequence variant" id="VAR_031301" description="In dbSNP:rs1008328." evidence="3 4 5">
    <original>L</original>
    <variation>F</variation>
    <location>
        <position position="1385"/>
    </location>
</feature>
<feature type="sequence conflict" description="In Ref. 1; BAC03488." evidence="16" ref="1">
    <original>I</original>
    <variation>T</variation>
    <location>
        <position position="370"/>
    </location>
</feature>
<feature type="sequence conflict" description="In Ref. 2; CAH56390." evidence="16" ref="2">
    <location>
        <position position="1174"/>
    </location>
</feature>
<feature type="sequence variant" id="VAR_082935" description="In MCPH2; uncertain significance; dbSNP:rs373781801." evidence="16">
    <original>A</original>
    <variation>T</variation>
    <location sequence="O43379-4">
        <position position="1078"/>
    </location>
</feature>
<reference key="1">
    <citation type="journal article" date="2004" name="Nat. Genet.">
        <title>Complete sequencing and characterization of 21,243 full-length human cDNAs.</title>
        <authorList>
            <person name="Ota T."/>
            <person name="Suzuki Y."/>
            <person name="Nishikawa T."/>
            <person name="Otsuki T."/>
            <person name="Sugiyama T."/>
            <person name="Irie R."/>
            <person name="Wakamatsu A."/>
            <person name="Hayashi K."/>
            <person name="Sato H."/>
            <person name="Nagai K."/>
            <person name="Kimura K."/>
            <person name="Makita H."/>
            <person name="Sekine M."/>
            <person name="Obayashi M."/>
            <person name="Nishi T."/>
            <person name="Shibahara T."/>
            <person name="Tanaka T."/>
            <person name="Ishii S."/>
            <person name="Yamamoto J."/>
            <person name="Saito K."/>
            <person name="Kawai Y."/>
            <person name="Isono Y."/>
            <person name="Nakamura Y."/>
            <person name="Nagahari K."/>
            <person name="Murakami K."/>
            <person name="Yasuda T."/>
            <person name="Iwayanagi T."/>
            <person name="Wagatsuma M."/>
            <person name="Shiratori A."/>
            <person name="Sudo H."/>
            <person name="Hosoiri T."/>
            <person name="Kaku Y."/>
            <person name="Kodaira H."/>
            <person name="Kondo H."/>
            <person name="Sugawara M."/>
            <person name="Takahashi M."/>
            <person name="Kanda K."/>
            <person name="Yokoi T."/>
            <person name="Furuya T."/>
            <person name="Kikkawa E."/>
            <person name="Omura Y."/>
            <person name="Abe K."/>
            <person name="Kamihara K."/>
            <person name="Katsuta N."/>
            <person name="Sato K."/>
            <person name="Tanikawa M."/>
            <person name="Yamazaki M."/>
            <person name="Ninomiya K."/>
            <person name="Ishibashi T."/>
            <person name="Yamashita H."/>
            <person name="Murakawa K."/>
            <person name="Fujimori K."/>
            <person name="Tanai H."/>
            <person name="Kimata M."/>
            <person name="Watanabe M."/>
            <person name="Hiraoka S."/>
            <person name="Chiba Y."/>
            <person name="Ishida S."/>
            <person name="Ono Y."/>
            <person name="Takiguchi S."/>
            <person name="Watanabe S."/>
            <person name="Yosida M."/>
            <person name="Hotuta T."/>
            <person name="Kusano J."/>
            <person name="Kanehori K."/>
            <person name="Takahashi-Fujii A."/>
            <person name="Hara H."/>
            <person name="Tanase T.-O."/>
            <person name="Nomura Y."/>
            <person name="Togiya S."/>
            <person name="Komai F."/>
            <person name="Hara R."/>
            <person name="Takeuchi K."/>
            <person name="Arita M."/>
            <person name="Imose N."/>
            <person name="Musashino K."/>
            <person name="Yuuki H."/>
            <person name="Oshima A."/>
            <person name="Sasaki N."/>
            <person name="Aotsuka S."/>
            <person name="Yoshikawa Y."/>
            <person name="Matsunawa H."/>
            <person name="Ichihara T."/>
            <person name="Shiohata N."/>
            <person name="Sano S."/>
            <person name="Moriya S."/>
            <person name="Momiyama H."/>
            <person name="Satoh N."/>
            <person name="Takami S."/>
            <person name="Terashima Y."/>
            <person name="Suzuki O."/>
            <person name="Nakagawa S."/>
            <person name="Senoh A."/>
            <person name="Mizoguchi H."/>
            <person name="Goto Y."/>
            <person name="Shimizu F."/>
            <person name="Wakebe H."/>
            <person name="Hishigaki H."/>
            <person name="Watanabe T."/>
            <person name="Sugiyama A."/>
            <person name="Takemoto M."/>
            <person name="Kawakami B."/>
            <person name="Yamazaki M."/>
            <person name="Watanabe K."/>
            <person name="Kumagai A."/>
            <person name="Itakura S."/>
            <person name="Fukuzumi Y."/>
            <person name="Fujimori Y."/>
            <person name="Komiyama M."/>
            <person name="Tashiro H."/>
            <person name="Tanigami A."/>
            <person name="Fujiwara T."/>
            <person name="Ono T."/>
            <person name="Yamada K."/>
            <person name="Fujii Y."/>
            <person name="Ozaki K."/>
            <person name="Hirao M."/>
            <person name="Ohmori Y."/>
            <person name="Kawabata A."/>
            <person name="Hikiji T."/>
            <person name="Kobatake N."/>
            <person name="Inagaki H."/>
            <person name="Ikema Y."/>
            <person name="Okamoto S."/>
            <person name="Okitani R."/>
            <person name="Kawakami T."/>
            <person name="Noguchi S."/>
            <person name="Itoh T."/>
            <person name="Shigeta K."/>
            <person name="Senba T."/>
            <person name="Matsumura K."/>
            <person name="Nakajima Y."/>
            <person name="Mizuno T."/>
            <person name="Morinaga M."/>
            <person name="Sasaki M."/>
            <person name="Togashi T."/>
            <person name="Oyama M."/>
            <person name="Hata H."/>
            <person name="Watanabe M."/>
            <person name="Komatsu T."/>
            <person name="Mizushima-Sugano J."/>
            <person name="Satoh T."/>
            <person name="Shirai Y."/>
            <person name="Takahashi Y."/>
            <person name="Nakagawa K."/>
            <person name="Okumura K."/>
            <person name="Nagase T."/>
            <person name="Nomura N."/>
            <person name="Kikuchi H."/>
            <person name="Masuho Y."/>
            <person name="Yamashita R."/>
            <person name="Nakai K."/>
            <person name="Yada T."/>
            <person name="Nakamura Y."/>
            <person name="Ohara O."/>
            <person name="Isogai T."/>
            <person name="Sugano S."/>
        </authorList>
    </citation>
    <scope>NUCLEOTIDE SEQUENCE [LARGE SCALE MRNA] (ISOFORM 3)</scope>
    <source>
        <tissue>Glial tumor</tissue>
    </source>
</reference>
<reference key="2">
    <citation type="journal article" date="2007" name="BMC Genomics">
        <title>The full-ORF clone resource of the German cDNA consortium.</title>
        <authorList>
            <person name="Bechtel S."/>
            <person name="Rosenfelder H."/>
            <person name="Duda A."/>
            <person name="Schmidt C.P."/>
            <person name="Ernst U."/>
            <person name="Wellenreuther R."/>
            <person name="Mehrle A."/>
            <person name="Schuster C."/>
            <person name="Bahr A."/>
            <person name="Bloecker H."/>
            <person name="Heubner D."/>
            <person name="Hoerlein A."/>
            <person name="Michel G."/>
            <person name="Wedler H."/>
            <person name="Koehrer K."/>
            <person name="Ottenwaelder B."/>
            <person name="Poustka A."/>
            <person name="Wiemann S."/>
            <person name="Schupp I."/>
        </authorList>
    </citation>
    <scope>NUCLEOTIDE SEQUENCE [LARGE SCALE MRNA] (ISOFORM 2)</scope>
    <scope>NUCLEOTIDE SEQUENCE [LARGE SCALE MRNA] OF 865-1518 (ISOFORM 1)</scope>
    <scope>VARIANTS LEU-1305 AND PHE-1385</scope>
    <source>
        <tissue>Testis</tissue>
    </source>
</reference>
<reference key="3">
    <citation type="journal article" date="2004" name="Nature">
        <title>The DNA sequence and biology of human chromosome 19.</title>
        <authorList>
            <person name="Grimwood J."/>
            <person name="Gordon L.A."/>
            <person name="Olsen A.S."/>
            <person name="Terry A."/>
            <person name="Schmutz J."/>
            <person name="Lamerdin J.E."/>
            <person name="Hellsten U."/>
            <person name="Goodstein D."/>
            <person name="Couronne O."/>
            <person name="Tran-Gyamfi M."/>
            <person name="Aerts A."/>
            <person name="Altherr M."/>
            <person name="Ashworth L."/>
            <person name="Bajorek E."/>
            <person name="Black S."/>
            <person name="Branscomb E."/>
            <person name="Caenepeel S."/>
            <person name="Carrano A.V."/>
            <person name="Caoile C."/>
            <person name="Chan Y.M."/>
            <person name="Christensen M."/>
            <person name="Cleland C.A."/>
            <person name="Copeland A."/>
            <person name="Dalin E."/>
            <person name="Dehal P."/>
            <person name="Denys M."/>
            <person name="Detter J.C."/>
            <person name="Escobar J."/>
            <person name="Flowers D."/>
            <person name="Fotopulos D."/>
            <person name="Garcia C."/>
            <person name="Georgescu A.M."/>
            <person name="Glavina T."/>
            <person name="Gomez M."/>
            <person name="Gonzales E."/>
            <person name="Groza M."/>
            <person name="Hammon N."/>
            <person name="Hawkins T."/>
            <person name="Haydu L."/>
            <person name="Ho I."/>
            <person name="Huang W."/>
            <person name="Israni S."/>
            <person name="Jett J."/>
            <person name="Kadner K."/>
            <person name="Kimball H."/>
            <person name="Kobayashi A."/>
            <person name="Larionov V."/>
            <person name="Leem S.-H."/>
            <person name="Lopez F."/>
            <person name="Lou Y."/>
            <person name="Lowry S."/>
            <person name="Malfatti S."/>
            <person name="Martinez D."/>
            <person name="McCready P.M."/>
            <person name="Medina C."/>
            <person name="Morgan J."/>
            <person name="Nelson K."/>
            <person name="Nolan M."/>
            <person name="Ovcharenko I."/>
            <person name="Pitluck S."/>
            <person name="Pollard M."/>
            <person name="Popkie A.P."/>
            <person name="Predki P."/>
            <person name="Quan G."/>
            <person name="Ramirez L."/>
            <person name="Rash S."/>
            <person name="Retterer J."/>
            <person name="Rodriguez A."/>
            <person name="Rogers S."/>
            <person name="Salamov A."/>
            <person name="Salazar A."/>
            <person name="She X."/>
            <person name="Smith D."/>
            <person name="Slezak T."/>
            <person name="Solovyev V."/>
            <person name="Thayer N."/>
            <person name="Tice H."/>
            <person name="Tsai M."/>
            <person name="Ustaszewska A."/>
            <person name="Vo N."/>
            <person name="Wagner M."/>
            <person name="Wheeler J."/>
            <person name="Wu K."/>
            <person name="Xie G."/>
            <person name="Yang J."/>
            <person name="Dubchak I."/>
            <person name="Furey T.S."/>
            <person name="DeJong P."/>
            <person name="Dickson M."/>
            <person name="Gordon D."/>
            <person name="Eichler E.E."/>
            <person name="Pennacchio L.A."/>
            <person name="Richardson P."/>
            <person name="Stubbs L."/>
            <person name="Rokhsar D.S."/>
            <person name="Myers R.M."/>
            <person name="Rubin E.M."/>
            <person name="Lucas S.M."/>
        </authorList>
    </citation>
    <scope>NUCLEOTIDE SEQUENCE [LARGE SCALE GENOMIC DNA]</scope>
    <scope>VARIANTS SER-850 AND PHE-1385</scope>
</reference>
<reference key="4">
    <citation type="journal article" date="2004" name="Genome Res.">
        <title>The status, quality, and expansion of the NIH full-length cDNA project: the Mammalian Gene Collection (MGC).</title>
        <authorList>
            <consortium name="The MGC Project Team"/>
        </authorList>
    </citation>
    <scope>NUCLEOTIDE SEQUENCE [LARGE SCALE MRNA] (ISOFORM 4)</scope>
    <scope>NUCLEOTIDE SEQUENCE [LARGE SCALE MRNA] OF 735-1518 (ISOFORM 1)</scope>
    <scope>VARIANTS SER-850; LEU-1305; SER-1370 AND PHE-1385</scope>
    <source>
        <tissue>Muscle</tissue>
    </source>
</reference>
<reference key="5">
    <citation type="journal article" date="2008" name="J. Proteome Res.">
        <title>Combining protein-based IMAC, peptide-based IMAC, and MudPIT for efficient phosphoproteomic analysis.</title>
        <authorList>
            <person name="Cantin G.T."/>
            <person name="Yi W."/>
            <person name="Lu B."/>
            <person name="Park S.K."/>
            <person name="Xu T."/>
            <person name="Lee J.-D."/>
            <person name="Yates J.R. III"/>
        </authorList>
    </citation>
    <scope>IDENTIFICATION BY MASS SPECTROMETRY [LARGE SCALE ANALYSIS]</scope>
    <source>
        <tissue>Cervix carcinoma</tissue>
    </source>
</reference>
<reference key="6">
    <citation type="journal article" date="2008" name="Proc. Natl. Acad. Sci. U.S.A.">
        <title>A quantitative atlas of mitotic phosphorylation.</title>
        <authorList>
            <person name="Dephoure N."/>
            <person name="Zhou C."/>
            <person name="Villen J."/>
            <person name="Beausoleil S.A."/>
            <person name="Bakalarski C.E."/>
            <person name="Elledge S.J."/>
            <person name="Gygi S.P."/>
        </authorList>
    </citation>
    <scope>PHOSPHORYLATION [LARGE SCALE ANALYSIS] AT SER-49; THR-50; SER-52; SER-501; THR-1053; SER-1123; SER-1228 AND THR-1268</scope>
    <scope>IDENTIFICATION BY MASS SPECTROMETRY [LARGE SCALE ANALYSIS]</scope>
    <source>
        <tissue>Cervix carcinoma</tissue>
    </source>
</reference>
<reference key="7">
    <citation type="journal article" date="2009" name="Anal. Chem.">
        <title>Lys-N and trypsin cover complementary parts of the phosphoproteome in a refined SCX-based approach.</title>
        <authorList>
            <person name="Gauci S."/>
            <person name="Helbig A.O."/>
            <person name="Slijper M."/>
            <person name="Krijgsveld J."/>
            <person name="Heck A.J."/>
            <person name="Mohammed S."/>
        </authorList>
    </citation>
    <scope>ACETYLATION [LARGE SCALE ANALYSIS] AT ALA-2</scope>
    <scope>CLEAVAGE OF INITIATOR METHIONINE [LARGE SCALE ANALYSIS]</scope>
    <scope>IDENTIFICATION BY MASS SPECTROMETRY [LARGE SCALE ANALYSIS]</scope>
</reference>
<reference key="8">
    <citation type="journal article" date="2009" name="Sci. Signal.">
        <title>Quantitative phosphoproteomic analysis of T cell receptor signaling reveals system-wide modulation of protein-protein interactions.</title>
        <authorList>
            <person name="Mayya V."/>
            <person name="Lundgren D.H."/>
            <person name="Hwang S.-I."/>
            <person name="Rezaul K."/>
            <person name="Wu L."/>
            <person name="Eng J.K."/>
            <person name="Rodionov V."/>
            <person name="Han D.K."/>
        </authorList>
    </citation>
    <scope>PHOSPHORYLATION [LARGE SCALE ANALYSIS] AT SER-1248 AND SER-1249</scope>
    <scope>IDENTIFICATION BY MASS SPECTROMETRY [LARGE SCALE ANALYSIS]</scope>
    <source>
        <tissue>Leukemic T-cell</tissue>
    </source>
</reference>
<reference key="9">
    <citation type="journal article" date="2010" name="Nat. Genet.">
        <title>WDR62 is associated with the spindle pole and is mutated in human microcephaly.</title>
        <authorList>
            <person name="Nicholas A.K."/>
            <person name="Khurshid M."/>
            <person name="Desir J."/>
            <person name="Carvalho O.P."/>
            <person name="Cox J.J."/>
            <person name="Thornton G."/>
            <person name="Kausar R."/>
            <person name="Ansar M."/>
            <person name="Ahmad W."/>
            <person name="Verloes A."/>
            <person name="Passemard S."/>
            <person name="Misson J.P."/>
            <person name="Lindsay S."/>
            <person name="Gergely F."/>
            <person name="Dobyns W.B."/>
            <person name="Roberts E."/>
            <person name="Abramowicz M."/>
            <person name="Woods C.G."/>
        </authorList>
    </citation>
    <scope>TISSUE SPECIFICITY</scope>
    <scope>SUBCELLULAR LOCATION</scope>
    <scope>VARIANTS MCPH2 MET-65; HIS-438 AND ASN-511</scope>
    <scope>VARIANT MCPH2 THR-1078 (ISOFORM 4)</scope>
    <scope>CHARACTERIZATION OF VARIANT MCPH2 HIS-438</scope>
</reference>
<reference key="10">
    <citation type="journal article" date="2010" name="Nat. Genet.">
        <title>Mutations in WDR62, encoding a centrosome-associated protein, cause microcephaly with simplified gyri and abnormal cortical architecture.</title>
        <authorList>
            <person name="Yu T.W."/>
            <person name="Mochida G.H."/>
            <person name="Tischfield D.J."/>
            <person name="Sgaier S.K."/>
            <person name="Flores-Sarnat L."/>
            <person name="Sergi C.M."/>
            <person name="Topcu M."/>
            <person name="McDonald M.T."/>
            <person name="Barry B.J."/>
            <person name="Felie J.M."/>
            <person name="Sunu C."/>
            <person name="Dobyns W.B."/>
            <person name="Folkerth R.D."/>
            <person name="Barkovich A.J."/>
            <person name="Walsh C.A."/>
        </authorList>
    </citation>
    <scope>FUNCTION</scope>
    <scope>SUBCELLULAR LOCATION</scope>
    <scope>VARIANT MCPH2 MET-65</scope>
</reference>
<reference key="11">
    <citation type="journal article" date="2010" name="Nature">
        <title>Whole-exome sequencing identifies recessive WDR62 mutations in severe brain malformations.</title>
        <authorList>
            <person name="Bilguvar K."/>
            <person name="Ozturk A.K."/>
            <person name="Louvi A."/>
            <person name="Kwan K.Y."/>
            <person name="Choi M."/>
            <person name="Tatli B."/>
            <person name="Yalnizoglu D."/>
            <person name="Tuysuz B."/>
            <person name="Caglayan A.O."/>
            <person name="Gokben S."/>
            <person name="Kaymakcalan H."/>
            <person name="Barak T."/>
            <person name="Bakircioglu M."/>
            <person name="Yasuno K."/>
            <person name="Ho W."/>
            <person name="Sanders S."/>
            <person name="Zhu Y."/>
            <person name="Yilmaz S."/>
            <person name="Dincer A."/>
            <person name="Johnson M.H."/>
            <person name="Bronen R.A."/>
            <person name="Kocer N."/>
            <person name="Per H."/>
            <person name="Mane S."/>
            <person name="Pamir M.N."/>
            <person name="Yalcinkaya C."/>
            <person name="Kumandas S."/>
            <person name="Topcu M."/>
            <person name="Ozmen M."/>
            <person name="Sestan N."/>
            <person name="Lifton R.P."/>
            <person name="State M.W."/>
            <person name="Gunel M."/>
        </authorList>
    </citation>
    <scope>FUNCTION</scope>
    <scope>SUBCELLULAR LOCATION</scope>
    <scope>VARIANTS MCPH2 SER-224 AND LYS-526</scope>
</reference>
<reference key="12">
    <citation type="journal article" date="2010" name="Sci. Signal.">
        <title>Quantitative phosphoproteomics reveals widespread full phosphorylation site occupancy during mitosis.</title>
        <authorList>
            <person name="Olsen J.V."/>
            <person name="Vermeulen M."/>
            <person name="Santamaria A."/>
            <person name="Kumar C."/>
            <person name="Miller M.L."/>
            <person name="Jensen L.J."/>
            <person name="Gnad F."/>
            <person name="Cox J."/>
            <person name="Jensen T.S."/>
            <person name="Nigg E.A."/>
            <person name="Brunak S."/>
            <person name="Mann M."/>
        </authorList>
    </citation>
    <scope>PHOSPHORYLATION [LARGE SCALE ANALYSIS] AT SER-49; SER-501; SER-1093 AND SER-1101</scope>
    <scope>IDENTIFICATION BY MASS SPECTROMETRY [LARGE SCALE ANALYSIS]</scope>
    <source>
        <tissue>Cervix carcinoma</tissue>
    </source>
</reference>
<reference key="13">
    <citation type="journal article" date="2011" name="Clin. Genet.">
        <title>Mutations in WDR62, encoding a centrosomal and nuclear protein, in Indian primary microcephaly families with cortical malformations.</title>
        <authorList>
            <person name="Bhat V."/>
            <person name="Girimaji S.C."/>
            <person name="Mohan G."/>
            <person name="Arvinda H.R."/>
            <person name="Singhmar P."/>
            <person name="Duvvari M.R."/>
            <person name="Kumar A."/>
        </authorList>
    </citation>
    <scope>INVOLVEMENT IN MCPH2</scope>
    <scope>SUBCELLULAR LOCATION</scope>
</reference>
<reference key="14">
    <citation type="journal article" date="2011" name="Sci. Signal.">
        <title>System-wide temporal characterization of the proteome and phosphoproteome of human embryonic stem cell differentiation.</title>
        <authorList>
            <person name="Rigbolt K.T."/>
            <person name="Prokhorova T.A."/>
            <person name="Akimov V."/>
            <person name="Henningsen J."/>
            <person name="Johansen P.T."/>
            <person name="Kratchmarova I."/>
            <person name="Kassem M."/>
            <person name="Mann M."/>
            <person name="Olsen J.V."/>
            <person name="Blagoev B."/>
        </authorList>
    </citation>
    <scope>PHOSPHORYLATION [LARGE SCALE ANALYSIS] AT THR-46 AND SER-49</scope>
    <scope>IDENTIFICATION BY MASS SPECTROMETRY [LARGE SCALE ANALYSIS]</scope>
</reference>
<reference key="15">
    <citation type="journal article" date="2012" name="Proc. Natl. Acad. Sci. U.S.A.">
        <title>N-terminal acetylome analyses and functional insights of the N-terminal acetyltransferase NatB.</title>
        <authorList>
            <person name="Van Damme P."/>
            <person name="Lasa M."/>
            <person name="Polevoda B."/>
            <person name="Gazquez C."/>
            <person name="Elosegui-Artola A."/>
            <person name="Kim D.S."/>
            <person name="De Juan-Pardo E."/>
            <person name="Demeyer K."/>
            <person name="Hole K."/>
            <person name="Larrea E."/>
            <person name="Timmerman E."/>
            <person name="Prieto J."/>
            <person name="Arnesen T."/>
            <person name="Sherman F."/>
            <person name="Gevaert K."/>
            <person name="Aldabe R."/>
        </authorList>
    </citation>
    <scope>ACETYLATION [LARGE SCALE ANALYSIS] AT ALA-2</scope>
    <scope>CLEAVAGE OF INITIATOR METHIONINE [LARGE SCALE ANALYSIS]</scope>
    <scope>IDENTIFICATION BY MASS SPECTROMETRY [LARGE SCALE ANALYSIS]</scope>
</reference>
<reference key="16">
    <citation type="journal article" date="2013" name="J. Biol. Chem.">
        <title>Identification and analysis of a novel dimerization domain shared by various members of c-Jun N-terminal kinase (JNK) scaffold proteins.</title>
        <authorList>
            <person name="Cohen-Katsenelson K."/>
            <person name="Wasserman T."/>
            <person name="Darlyuk-Saadon I."/>
            <person name="Rabner A."/>
            <person name="Glaser F."/>
            <person name="Aronheim A."/>
        </authorList>
    </citation>
    <scope>SUBUNIT</scope>
    <scope>INTERACTION WITH MAPKBP1</scope>
</reference>
<reference key="17">
    <citation type="journal article" date="2013" name="J. Proteome Res.">
        <title>Toward a comprehensive characterization of a human cancer cell phosphoproteome.</title>
        <authorList>
            <person name="Zhou H."/>
            <person name="Di Palma S."/>
            <person name="Preisinger C."/>
            <person name="Peng M."/>
            <person name="Polat A.N."/>
            <person name="Heck A.J."/>
            <person name="Mohammed S."/>
        </authorList>
    </citation>
    <scope>PHOSPHORYLATION [LARGE SCALE ANALYSIS] AT SER-33; SER-49; THR-50; SER-501; SER-1070; SER-1123; SER-1144 AND SER-1228</scope>
    <scope>IDENTIFICATION BY MASS SPECTROMETRY [LARGE SCALE ANALYSIS]</scope>
    <source>
        <tissue>Cervix carcinoma</tissue>
        <tissue>Erythroleukemia</tissue>
    </source>
</reference>
<reference key="18">
    <citation type="journal article" date="2015" name="Elife">
        <title>Centriolar satellites assemble centrosomal microcephaly proteins to recruit CDK2 and promote centriole duplication.</title>
        <authorList>
            <person name="Kodani A."/>
            <person name="Yu T.W."/>
            <person name="Johnson J.R."/>
            <person name="Jayaraman D."/>
            <person name="Johnson T.L."/>
            <person name="Al-Gazali L."/>
            <person name="Sztriha L."/>
            <person name="Partlow J.N."/>
            <person name="Kim H."/>
            <person name="Krup A.L."/>
            <person name="Dammermann A."/>
            <person name="Krogan N."/>
            <person name="Walsh C.A."/>
            <person name="Reiter J.F."/>
        </authorList>
    </citation>
    <scope>FUNCTION</scope>
    <scope>INTERACTION WITH CDK5RAP2; CEP152; CEP63 AND KIAA0753</scope>
    <scope>SUBCELLULAR LOCATION</scope>
</reference>
<reference key="19">
    <citation type="journal article" date="2017" name="Am. J. Hum. Genet.">
        <title>Mutations in MAPKBP1 cause juvenile or late-onset cilia-independent nephronophthisis.</title>
        <authorList>
            <person name="Macia M.S."/>
            <person name="Halbritter J."/>
            <person name="Delous M."/>
            <person name="Bredrup C."/>
            <person name="Gutter A."/>
            <person name="Filhol E."/>
            <person name="Mellgren A.E."/>
            <person name="Leh S."/>
            <person name="Bizet A."/>
            <person name="Braun D.A."/>
            <person name="Gee H.Y."/>
            <person name="Silbermann F."/>
            <person name="Henry C."/>
            <person name="Krug P."/>
            <person name="Bole-Feysot C."/>
            <person name="Nitschke P."/>
            <person name="Joly D."/>
            <person name="Nicoud P."/>
            <person name="Paget A."/>
            <person name="Haugland H."/>
            <person name="Brackmann D."/>
            <person name="Ahmet N."/>
            <person name="Sandford R."/>
            <person name="Cengiz N."/>
            <person name="Knappskog P.M."/>
            <person name="Boman H."/>
            <person name="Linghu B."/>
            <person name="Yang F."/>
            <person name="Oakeley E.J."/>
            <person name="Saint Mezard P."/>
            <person name="Sailer A.W."/>
            <person name="Johansson S."/>
            <person name="Roedahl E."/>
            <person name="Saunier S."/>
            <person name="Hildebrandt F."/>
            <person name="Benmerah A."/>
        </authorList>
    </citation>
    <scope>SUBCELLULAR LOCATION</scope>
    <scope>INTERACTION WITH MAPKBP1</scope>
</reference>
<reference key="20">
    <citation type="journal article" date="2017" name="Am. J. Hum. Genet.">
        <authorList>
            <person name="Macia M.S."/>
            <person name="Halbritter J."/>
            <person name="Delous M."/>
            <person name="Bredrup C."/>
            <person name="Gutter A."/>
            <person name="Filhol E."/>
            <person name="Mellgren A.E."/>
            <person name="Leh S."/>
            <person name="Bizet A."/>
            <person name="Braun D.A."/>
            <person name="Gee H.Y."/>
            <person name="Silbermann F."/>
            <person name="Henry C."/>
            <person name="Krug P."/>
            <person name="Bole-Feysot C."/>
            <person name="Nitschke P."/>
            <person name="Joly D."/>
            <person name="Nicoud P."/>
            <person name="Paget A."/>
            <person name="Haugland H."/>
            <person name="Brackmann D."/>
            <person name="Ahmet N."/>
            <person name="Sandford R."/>
            <person name="Cengiz N."/>
            <person name="Knappskog P.M."/>
            <person name="Boman H."/>
            <person name="Linghu B."/>
            <person name="Yang F."/>
            <person name="Oakeley E.J."/>
            <person name="Saint Mezard P."/>
            <person name="Sailer A.W."/>
            <person name="Johansson S."/>
            <person name="Roedahl E."/>
            <person name="Saunier S."/>
            <person name="Hildebrandt F."/>
            <person name="Benmerah A."/>
        </authorList>
    </citation>
    <scope>ERRATUM OF PUBMED:28089251</scope>
</reference>
<name>WDR62_HUMAN</name>
<protein>
    <recommendedName>
        <fullName>WD repeat-containing protein 62</fullName>
    </recommendedName>
</protein>
<keyword id="KW-0007">Acetylation</keyword>
<keyword id="KW-0025">Alternative splicing</keyword>
<keyword id="KW-0963">Cytoplasm</keyword>
<keyword id="KW-0206">Cytoskeleton</keyword>
<keyword id="KW-0225">Disease variant</keyword>
<keyword id="KW-0991">Intellectual disability</keyword>
<keyword id="KW-0524">Neurogenesis</keyword>
<keyword id="KW-0539">Nucleus</keyword>
<keyword id="KW-0597">Phosphoprotein</keyword>
<keyword id="KW-0905">Primary microcephaly</keyword>
<keyword id="KW-1267">Proteomics identification</keyword>
<keyword id="KW-1185">Reference proteome</keyword>
<keyword id="KW-0677">Repeat</keyword>
<keyword id="KW-0853">WD repeat</keyword>
<organism>
    <name type="scientific">Homo sapiens</name>
    <name type="common">Human</name>
    <dbReference type="NCBI Taxonomy" id="9606"/>
    <lineage>
        <taxon>Eukaryota</taxon>
        <taxon>Metazoa</taxon>
        <taxon>Chordata</taxon>
        <taxon>Craniata</taxon>
        <taxon>Vertebrata</taxon>
        <taxon>Euteleostomi</taxon>
        <taxon>Mammalia</taxon>
        <taxon>Eutheria</taxon>
        <taxon>Euarchontoglires</taxon>
        <taxon>Primates</taxon>
        <taxon>Haplorrhini</taxon>
        <taxon>Catarrhini</taxon>
        <taxon>Hominidae</taxon>
        <taxon>Homo</taxon>
    </lineage>
</organism>
<dbReference type="EMBL" id="AK090617">
    <property type="protein sequence ID" value="BAC03488.1"/>
    <property type="molecule type" value="mRNA"/>
</dbReference>
<dbReference type="EMBL" id="BX647726">
    <property type="protein sequence ID" value="CAH56191.1"/>
    <property type="molecule type" value="mRNA"/>
</dbReference>
<dbReference type="EMBL" id="AL133651">
    <property type="protein sequence ID" value="CAH56390.1"/>
    <property type="molecule type" value="mRNA"/>
</dbReference>
<dbReference type="EMBL" id="AD000813">
    <property type="status" value="NOT_ANNOTATED_CDS"/>
    <property type="molecule type" value="Genomic_DNA"/>
</dbReference>
<dbReference type="EMBL" id="AC004144">
    <property type="protein sequence ID" value="AAC27979.1"/>
    <property type="status" value="ALT_SEQ"/>
    <property type="molecule type" value="Genomic_DNA"/>
</dbReference>
<dbReference type="EMBL" id="BC017261">
    <property type="protein sequence ID" value="AAH17261.1"/>
    <property type="status" value="ALT_INIT"/>
    <property type="molecule type" value="mRNA"/>
</dbReference>
<dbReference type="EMBL" id="BC058939">
    <property type="status" value="NOT_ANNOTATED_CDS"/>
    <property type="molecule type" value="mRNA"/>
</dbReference>
<dbReference type="CCDS" id="CCDS33001.1">
    <molecule id="O43379-1"/>
</dbReference>
<dbReference type="CCDS" id="CCDS46059.1">
    <molecule id="O43379-4"/>
</dbReference>
<dbReference type="PIR" id="T01437">
    <property type="entry name" value="T01437"/>
</dbReference>
<dbReference type="RefSeq" id="NP_001077430.1">
    <molecule id="O43379-4"/>
    <property type="nucleotide sequence ID" value="NM_001083961.2"/>
</dbReference>
<dbReference type="RefSeq" id="NP_775907.4">
    <molecule id="O43379-1"/>
    <property type="nucleotide sequence ID" value="NM_173636.4"/>
</dbReference>
<dbReference type="RefSeq" id="XP_016882154.1">
    <molecule id="O43379-4"/>
    <property type="nucleotide sequence ID" value="XM_017026665.2"/>
</dbReference>
<dbReference type="SMR" id="O43379"/>
<dbReference type="BioGRID" id="129863">
    <property type="interactions" value="116"/>
</dbReference>
<dbReference type="DIP" id="DIP-56792N"/>
<dbReference type="FunCoup" id="O43379">
    <property type="interactions" value="1054"/>
</dbReference>
<dbReference type="IntAct" id="O43379">
    <property type="interactions" value="87"/>
</dbReference>
<dbReference type="MINT" id="O43379"/>
<dbReference type="STRING" id="9606.ENSP00000384792"/>
<dbReference type="GlyGen" id="O43379">
    <property type="glycosylation" value="7 sites, 1 O-linked glycan (4 sites)"/>
</dbReference>
<dbReference type="iPTMnet" id="O43379"/>
<dbReference type="PhosphoSitePlus" id="O43379"/>
<dbReference type="BioMuta" id="WDR62"/>
<dbReference type="jPOST" id="O43379"/>
<dbReference type="MassIVE" id="O43379"/>
<dbReference type="PaxDb" id="9606-ENSP00000384792"/>
<dbReference type="PeptideAtlas" id="O43379"/>
<dbReference type="ProteomicsDB" id="48915">
    <molecule id="O43379-1"/>
</dbReference>
<dbReference type="ProteomicsDB" id="48916">
    <molecule id="O43379-2"/>
</dbReference>
<dbReference type="ProteomicsDB" id="48917">
    <molecule id="O43379-3"/>
</dbReference>
<dbReference type="ProteomicsDB" id="48918">
    <molecule id="O43379-4"/>
</dbReference>
<dbReference type="Pumba" id="O43379"/>
<dbReference type="Antibodypedia" id="29678">
    <property type="antibodies" value="60 antibodies from 14 providers"/>
</dbReference>
<dbReference type="DNASU" id="284403"/>
<dbReference type="Ensembl" id="ENST00000270301.12">
    <molecule id="O43379-1"/>
    <property type="protein sequence ID" value="ENSP00000270301.6"/>
    <property type="gene ID" value="ENSG00000075702.19"/>
</dbReference>
<dbReference type="Ensembl" id="ENST00000378860.8">
    <molecule id="O43379-3"/>
    <property type="protein sequence ID" value="ENSP00000504870.1"/>
    <property type="gene ID" value="ENSG00000075702.19"/>
</dbReference>
<dbReference type="Ensembl" id="ENST00000401500.7">
    <molecule id="O43379-4"/>
    <property type="protein sequence ID" value="ENSP00000384792.1"/>
    <property type="gene ID" value="ENSG00000075702.19"/>
</dbReference>
<dbReference type="Ensembl" id="ENST00000587391.6">
    <molecule id="O43379-2"/>
    <property type="protein sequence ID" value="ENSP00000465525.1"/>
    <property type="gene ID" value="ENSG00000075702.19"/>
</dbReference>
<dbReference type="GeneID" id="284403"/>
<dbReference type="KEGG" id="hsa:284403"/>
<dbReference type="MANE-Select" id="ENST00000401500.7">
    <molecule id="O43379-4"/>
    <property type="protein sequence ID" value="ENSP00000384792.1"/>
    <property type="RefSeq nucleotide sequence ID" value="NM_001083961.2"/>
    <property type="RefSeq protein sequence ID" value="NP_001077430.1"/>
</dbReference>
<dbReference type="UCSC" id="uc002odc.3">
    <molecule id="O43379-1"/>
    <property type="organism name" value="human"/>
</dbReference>
<dbReference type="AGR" id="HGNC:24502"/>
<dbReference type="CTD" id="284403"/>
<dbReference type="DisGeNET" id="284403"/>
<dbReference type="GeneCards" id="WDR62"/>
<dbReference type="GeneReviews" id="WDR62"/>
<dbReference type="HGNC" id="HGNC:24502">
    <property type="gene designation" value="WDR62"/>
</dbReference>
<dbReference type="HPA" id="ENSG00000075702">
    <property type="expression patterns" value="Tissue enhanced (skeletal muscle, testis, tongue)"/>
</dbReference>
<dbReference type="MalaCards" id="WDR62"/>
<dbReference type="MIM" id="604317">
    <property type="type" value="phenotype"/>
</dbReference>
<dbReference type="MIM" id="613583">
    <property type="type" value="gene"/>
</dbReference>
<dbReference type="neXtProt" id="NX_O43379"/>
<dbReference type="OpenTargets" id="ENSG00000075702"/>
<dbReference type="Orphanet" id="2512">
    <property type="disease" value="Autosomal recessive primary microcephaly"/>
</dbReference>
<dbReference type="PharmGKB" id="PA134963627"/>
<dbReference type="VEuPathDB" id="HostDB:ENSG00000075702"/>
<dbReference type="eggNOG" id="KOG1408">
    <property type="taxonomic scope" value="Eukaryota"/>
</dbReference>
<dbReference type="GeneTree" id="ENSGT00940000160719"/>
<dbReference type="HOGENOM" id="CLU_056306_0_0_1"/>
<dbReference type="InParanoid" id="O43379"/>
<dbReference type="OMA" id="QEDGCGH"/>
<dbReference type="OrthoDB" id="6154712at2759"/>
<dbReference type="PAN-GO" id="O43379">
    <property type="GO annotations" value="2 GO annotations based on evolutionary models"/>
</dbReference>
<dbReference type="PhylomeDB" id="O43379"/>
<dbReference type="TreeFam" id="TF323254"/>
<dbReference type="PathwayCommons" id="O43379"/>
<dbReference type="SignaLink" id="O43379"/>
<dbReference type="SIGNOR" id="O43379"/>
<dbReference type="BioGRID-ORCS" id="284403">
    <property type="hits" value="44 hits in 1160 CRISPR screens"/>
</dbReference>
<dbReference type="CD-CODE" id="8C2F96ED">
    <property type="entry name" value="Centrosome"/>
</dbReference>
<dbReference type="CD-CODE" id="DEE660B4">
    <property type="entry name" value="Stress granule"/>
</dbReference>
<dbReference type="ChiTaRS" id="WDR62">
    <property type="organism name" value="human"/>
</dbReference>
<dbReference type="GeneWiki" id="WDR62"/>
<dbReference type="GenomeRNAi" id="284403"/>
<dbReference type="Pharos" id="O43379">
    <property type="development level" value="Tbio"/>
</dbReference>
<dbReference type="PRO" id="PR:O43379"/>
<dbReference type="Proteomes" id="UP000005640">
    <property type="component" value="Chromosome 19"/>
</dbReference>
<dbReference type="RNAct" id="O43379">
    <property type="molecule type" value="protein"/>
</dbReference>
<dbReference type="Bgee" id="ENSG00000075702">
    <property type="expression patterns" value="Expressed in left testis and 165 other cell types or tissues"/>
</dbReference>
<dbReference type="ExpressionAtlas" id="O43379">
    <property type="expression patterns" value="baseline and differential"/>
</dbReference>
<dbReference type="GO" id="GO:0034451">
    <property type="term" value="C:centriolar satellite"/>
    <property type="evidence" value="ECO:0000314"/>
    <property type="project" value="HPA"/>
</dbReference>
<dbReference type="GO" id="GO:0005814">
    <property type="term" value="C:centriole"/>
    <property type="evidence" value="ECO:0007669"/>
    <property type="project" value="UniProtKB-SubCell"/>
</dbReference>
<dbReference type="GO" id="GO:0005813">
    <property type="term" value="C:centrosome"/>
    <property type="evidence" value="ECO:0000314"/>
    <property type="project" value="UniProtKB"/>
</dbReference>
<dbReference type="GO" id="GO:0005829">
    <property type="term" value="C:cytosol"/>
    <property type="evidence" value="ECO:0000314"/>
    <property type="project" value="HPA"/>
</dbReference>
<dbReference type="GO" id="GO:0005634">
    <property type="term" value="C:nucleus"/>
    <property type="evidence" value="ECO:0000314"/>
    <property type="project" value="UniProtKB"/>
</dbReference>
<dbReference type="GO" id="GO:0000922">
    <property type="term" value="C:spindle pole"/>
    <property type="evidence" value="ECO:0000314"/>
    <property type="project" value="UniProtKB"/>
</dbReference>
<dbReference type="GO" id="GO:0007099">
    <property type="term" value="P:centriole replication"/>
    <property type="evidence" value="ECO:0000315"/>
    <property type="project" value="UniProtKB"/>
</dbReference>
<dbReference type="GO" id="GO:0021987">
    <property type="term" value="P:cerebral cortex development"/>
    <property type="evidence" value="ECO:0000315"/>
    <property type="project" value="UniProtKB"/>
</dbReference>
<dbReference type="GO" id="GO:0007052">
    <property type="term" value="P:mitotic spindle organization"/>
    <property type="evidence" value="ECO:0000315"/>
    <property type="project" value="MGI"/>
</dbReference>
<dbReference type="GO" id="GO:0022008">
    <property type="term" value="P:neurogenesis"/>
    <property type="evidence" value="ECO:0000315"/>
    <property type="project" value="UniProtKB"/>
</dbReference>
<dbReference type="GO" id="GO:0002052">
    <property type="term" value="P:positive regulation of neuroblast proliferation"/>
    <property type="evidence" value="ECO:0007669"/>
    <property type="project" value="Ensembl"/>
</dbReference>
<dbReference type="GO" id="GO:2001224">
    <property type="term" value="P:positive regulation of neuron migration"/>
    <property type="evidence" value="ECO:0007669"/>
    <property type="project" value="Ensembl"/>
</dbReference>
<dbReference type="GO" id="GO:0046605">
    <property type="term" value="P:regulation of centrosome cycle"/>
    <property type="evidence" value="ECO:0007669"/>
    <property type="project" value="Ensembl"/>
</dbReference>
<dbReference type="GO" id="GO:0045664">
    <property type="term" value="P:regulation of neuron differentiation"/>
    <property type="evidence" value="ECO:0007669"/>
    <property type="project" value="Ensembl"/>
</dbReference>
<dbReference type="FunFam" id="2.130.10.10:FF:000091">
    <property type="entry name" value="mitogen-activated protein kinase-binding protein 1 isoform X1"/>
    <property type="match status" value="1"/>
</dbReference>
<dbReference type="FunFam" id="2.130.10.10:FF:000536">
    <property type="entry name" value="WD repeat domain 62"/>
    <property type="match status" value="1"/>
</dbReference>
<dbReference type="FunFam" id="2.130.10.10:FF:000046">
    <property type="entry name" value="WD repeat-containing protein 62 isoform 1"/>
    <property type="match status" value="1"/>
</dbReference>
<dbReference type="FunFam" id="2.130.10.10:FF:000124">
    <property type="entry name" value="WD repeat-containing protein 62 isoform 1"/>
    <property type="match status" value="1"/>
</dbReference>
<dbReference type="Gene3D" id="2.130.10.10">
    <property type="entry name" value="YVTN repeat-like/Quinoprotein amine dehydrogenase"/>
    <property type="match status" value="4"/>
</dbReference>
<dbReference type="InterPro" id="IPR011047">
    <property type="entry name" value="Quinoprotein_ADH-like_sf"/>
</dbReference>
<dbReference type="InterPro" id="IPR015943">
    <property type="entry name" value="WD40/YVTN_repeat-like_dom_sf"/>
</dbReference>
<dbReference type="InterPro" id="IPR056161">
    <property type="entry name" value="WD40_MABP1-WDR62_1st"/>
</dbReference>
<dbReference type="InterPro" id="IPR056162">
    <property type="entry name" value="WD40_MABP1-WDR62_2nd"/>
</dbReference>
<dbReference type="InterPro" id="IPR036322">
    <property type="entry name" value="WD40_repeat_dom_sf"/>
</dbReference>
<dbReference type="InterPro" id="IPR001680">
    <property type="entry name" value="WD40_rpt"/>
</dbReference>
<dbReference type="InterPro" id="IPR052779">
    <property type="entry name" value="WDR62"/>
</dbReference>
<dbReference type="InterPro" id="IPR056364">
    <property type="entry name" value="WDR62-MABP1_CC"/>
</dbReference>
<dbReference type="PANTHER" id="PTHR45589">
    <property type="entry name" value="WD REPEAT DOMAIN 62, ISOFORM G"/>
    <property type="match status" value="1"/>
</dbReference>
<dbReference type="PANTHER" id="PTHR45589:SF3">
    <property type="entry name" value="WD REPEAT-CONTAINING PROTEIN 62"/>
    <property type="match status" value="1"/>
</dbReference>
<dbReference type="Pfam" id="PF24780">
    <property type="entry name" value="WD40_MABP1-WDR62_1st"/>
    <property type="match status" value="1"/>
</dbReference>
<dbReference type="Pfam" id="PF24782">
    <property type="entry name" value="WD40_MABP1-WDR62_2nd"/>
    <property type="match status" value="1"/>
</dbReference>
<dbReference type="Pfam" id="PF24795">
    <property type="entry name" value="WDR62-MABP1_CC"/>
    <property type="match status" value="1"/>
</dbReference>
<dbReference type="SMART" id="SM00320">
    <property type="entry name" value="WD40"/>
    <property type="match status" value="12"/>
</dbReference>
<dbReference type="SUPFAM" id="SSF50998">
    <property type="entry name" value="Quinoprotein alcohol dehydrogenase-like"/>
    <property type="match status" value="1"/>
</dbReference>
<dbReference type="SUPFAM" id="SSF50978">
    <property type="entry name" value="WD40 repeat-like"/>
    <property type="match status" value="1"/>
</dbReference>
<dbReference type="PROSITE" id="PS50082">
    <property type="entry name" value="WD_REPEATS_2"/>
    <property type="match status" value="1"/>
</dbReference>
<dbReference type="PROSITE" id="PS50294">
    <property type="entry name" value="WD_REPEATS_REGION"/>
    <property type="match status" value="3"/>
</dbReference>